<feature type="chain" id="PRO_0000098935" description="Tryptophan synthase beta chain">
    <location>
        <begin position="1"/>
        <end position="392"/>
    </location>
</feature>
<feature type="modified residue" description="N6-(pyridoxal phosphate)lysine" evidence="1">
    <location>
        <position position="84"/>
    </location>
</feature>
<keyword id="KW-0028">Amino-acid biosynthesis</keyword>
<keyword id="KW-0057">Aromatic amino acid biosynthesis</keyword>
<keyword id="KW-0456">Lyase</keyword>
<keyword id="KW-0663">Pyridoxal phosphate</keyword>
<keyword id="KW-0822">Tryptophan biosynthesis</keyword>
<reference key="1">
    <citation type="journal article" date="2005" name="PLoS Biol.">
        <title>Major structural differences and novel potential virulence mechanisms from the genomes of multiple Campylobacter species.</title>
        <authorList>
            <person name="Fouts D.E."/>
            <person name="Mongodin E.F."/>
            <person name="Mandrell R.E."/>
            <person name="Miller W.G."/>
            <person name="Rasko D.A."/>
            <person name="Ravel J."/>
            <person name="Brinkac L.M."/>
            <person name="DeBoy R.T."/>
            <person name="Parker C.T."/>
            <person name="Daugherty S.C."/>
            <person name="Dodson R.J."/>
            <person name="Durkin A.S."/>
            <person name="Madupu R."/>
            <person name="Sullivan S.A."/>
            <person name="Shetty J.U."/>
            <person name="Ayodeji M.A."/>
            <person name="Shvartsbeyn A."/>
            <person name="Schatz M.C."/>
            <person name="Badger J.H."/>
            <person name="Fraser C.M."/>
            <person name="Nelson K.E."/>
        </authorList>
    </citation>
    <scope>NUCLEOTIDE SEQUENCE [LARGE SCALE GENOMIC DNA]</scope>
    <source>
        <strain>RM1221</strain>
    </source>
</reference>
<proteinExistence type="inferred from homology"/>
<evidence type="ECO:0000255" key="1">
    <source>
        <dbReference type="HAMAP-Rule" id="MF_00133"/>
    </source>
</evidence>
<protein>
    <recommendedName>
        <fullName evidence="1">Tryptophan synthase beta chain</fullName>
        <ecNumber evidence="1">4.2.1.20</ecNumber>
    </recommendedName>
</protein>
<accession>Q5HWB9</accession>
<sequence>MKKAYYGDFGGQFLPESAMFALNELEGAFLKFSKDKLFKKELNELLKTYVGRPTPLYFARNLSKKYQHEIYLKREDLNHTGAHKINNAIAQALLAKKMGKKKIIAETGAGQHGLATATAAALLGLECEIYMGATDVQRQALNVYKMELLGAKIHAVQSGLKTLKEATTAAIQAWVGDIKNIFYVVGSAVGPYPYPKMVMHFQSIIGKECKMQLQKLNKKVDYIIAAVGGGSNAAGIFYDFIKDENVKLIGIEAGGLGIDTPYHAATLNKGKTGIIHGMKTKVLQDDLGNILPVHSVSAGLDYPGIGPLHAFLFESKRAQYHAISDEECMQALKLLCKEEGIIAAIESSHALAFLEKLCPTLKKKSVIVVNLSGRGDKDMQMIRDYKKGVIYG</sequence>
<dbReference type="EC" id="4.2.1.20" evidence="1"/>
<dbReference type="EMBL" id="CP000025">
    <property type="protein sequence ID" value="AAW34986.1"/>
    <property type="molecule type" value="Genomic_DNA"/>
</dbReference>
<dbReference type="RefSeq" id="WP_002854204.1">
    <property type="nucleotide sequence ID" value="NC_003912.7"/>
</dbReference>
<dbReference type="SMR" id="Q5HWB9"/>
<dbReference type="KEGG" id="cjr:CJE0397"/>
<dbReference type="HOGENOM" id="CLU_016734_3_1_7"/>
<dbReference type="UniPathway" id="UPA00035">
    <property type="reaction ID" value="UER00044"/>
</dbReference>
<dbReference type="GO" id="GO:0005737">
    <property type="term" value="C:cytoplasm"/>
    <property type="evidence" value="ECO:0007669"/>
    <property type="project" value="TreeGrafter"/>
</dbReference>
<dbReference type="GO" id="GO:0004834">
    <property type="term" value="F:tryptophan synthase activity"/>
    <property type="evidence" value="ECO:0007669"/>
    <property type="project" value="UniProtKB-UniRule"/>
</dbReference>
<dbReference type="CDD" id="cd06446">
    <property type="entry name" value="Trp-synth_B"/>
    <property type="match status" value="1"/>
</dbReference>
<dbReference type="FunFam" id="3.40.50.1100:FF:000004">
    <property type="entry name" value="Tryptophan synthase beta chain"/>
    <property type="match status" value="1"/>
</dbReference>
<dbReference type="Gene3D" id="3.40.50.1100">
    <property type="match status" value="2"/>
</dbReference>
<dbReference type="HAMAP" id="MF_00133">
    <property type="entry name" value="Trp_synth_beta"/>
    <property type="match status" value="1"/>
</dbReference>
<dbReference type="InterPro" id="IPR006653">
    <property type="entry name" value="Trp_synth_b_CS"/>
</dbReference>
<dbReference type="InterPro" id="IPR006654">
    <property type="entry name" value="Trp_synth_beta"/>
</dbReference>
<dbReference type="InterPro" id="IPR023026">
    <property type="entry name" value="Trp_synth_beta/beta-like"/>
</dbReference>
<dbReference type="InterPro" id="IPR001926">
    <property type="entry name" value="TrpB-like_PALP"/>
</dbReference>
<dbReference type="InterPro" id="IPR036052">
    <property type="entry name" value="TrpB-like_PALP_sf"/>
</dbReference>
<dbReference type="NCBIfam" id="TIGR00263">
    <property type="entry name" value="trpB"/>
    <property type="match status" value="1"/>
</dbReference>
<dbReference type="PANTHER" id="PTHR48077:SF3">
    <property type="entry name" value="TRYPTOPHAN SYNTHASE"/>
    <property type="match status" value="1"/>
</dbReference>
<dbReference type="PANTHER" id="PTHR48077">
    <property type="entry name" value="TRYPTOPHAN SYNTHASE-RELATED"/>
    <property type="match status" value="1"/>
</dbReference>
<dbReference type="Pfam" id="PF00291">
    <property type="entry name" value="PALP"/>
    <property type="match status" value="1"/>
</dbReference>
<dbReference type="PIRSF" id="PIRSF001413">
    <property type="entry name" value="Trp_syn_beta"/>
    <property type="match status" value="1"/>
</dbReference>
<dbReference type="SUPFAM" id="SSF53686">
    <property type="entry name" value="Tryptophan synthase beta subunit-like PLP-dependent enzymes"/>
    <property type="match status" value="1"/>
</dbReference>
<dbReference type="PROSITE" id="PS00168">
    <property type="entry name" value="TRP_SYNTHASE_BETA"/>
    <property type="match status" value="1"/>
</dbReference>
<comment type="function">
    <text evidence="1">The beta subunit is responsible for the synthesis of L-tryptophan from indole and L-serine.</text>
</comment>
<comment type="catalytic activity">
    <reaction evidence="1">
        <text>(1S,2R)-1-C-(indol-3-yl)glycerol 3-phosphate + L-serine = D-glyceraldehyde 3-phosphate + L-tryptophan + H2O</text>
        <dbReference type="Rhea" id="RHEA:10532"/>
        <dbReference type="ChEBI" id="CHEBI:15377"/>
        <dbReference type="ChEBI" id="CHEBI:33384"/>
        <dbReference type="ChEBI" id="CHEBI:57912"/>
        <dbReference type="ChEBI" id="CHEBI:58866"/>
        <dbReference type="ChEBI" id="CHEBI:59776"/>
        <dbReference type="EC" id="4.2.1.20"/>
    </reaction>
</comment>
<comment type="cofactor">
    <cofactor evidence="1">
        <name>pyridoxal 5'-phosphate</name>
        <dbReference type="ChEBI" id="CHEBI:597326"/>
    </cofactor>
</comment>
<comment type="pathway">
    <text evidence="1">Amino-acid biosynthesis; L-tryptophan biosynthesis; L-tryptophan from chorismate: step 5/5.</text>
</comment>
<comment type="subunit">
    <text evidence="1">Tetramer of two alpha and two beta chains.</text>
</comment>
<comment type="similarity">
    <text evidence="1">Belongs to the TrpB family.</text>
</comment>
<organism>
    <name type="scientific">Campylobacter jejuni (strain RM1221)</name>
    <dbReference type="NCBI Taxonomy" id="195099"/>
    <lineage>
        <taxon>Bacteria</taxon>
        <taxon>Pseudomonadati</taxon>
        <taxon>Campylobacterota</taxon>
        <taxon>Epsilonproteobacteria</taxon>
        <taxon>Campylobacterales</taxon>
        <taxon>Campylobacteraceae</taxon>
        <taxon>Campylobacter</taxon>
    </lineage>
</organism>
<gene>
    <name evidence="1" type="primary">trpB</name>
    <name type="ordered locus">CJE0397</name>
</gene>
<name>TRPB_CAMJR</name>